<keyword id="KW-0090">Biological rhythms</keyword>
<keyword id="KW-0168">Coated pit</keyword>
<keyword id="KW-0963">Cytoplasm</keyword>
<keyword id="KW-0968">Cytoplasmic vesicle</keyword>
<keyword id="KW-0333">Golgi apparatus</keyword>
<keyword id="KW-0342">GTP-binding</keyword>
<keyword id="KW-0378">Hydrolase</keyword>
<keyword id="KW-0446">Lipid-binding</keyword>
<keyword id="KW-0472">Membrane</keyword>
<keyword id="KW-0496">Mitochondrion</keyword>
<keyword id="KW-1000">Mitochondrion outer membrane</keyword>
<keyword id="KW-0547">Nucleotide-binding</keyword>
<keyword id="KW-0576">Peroxisome</keyword>
<keyword id="KW-1185">Reference proteome</keyword>
<keyword id="KW-0770">Synapse</keyword>
<reference key="1">
    <citation type="submission" date="2003-08" db="EMBL/GenBank/DDBJ databases">
        <authorList>
            <consortium name="NIH - Zebrafish Gene Collection (ZGC) project"/>
        </authorList>
    </citation>
    <scope>NUCLEOTIDE SEQUENCE [LARGE SCALE MRNA]</scope>
</reference>
<evidence type="ECO:0000250" key="1"/>
<evidence type="ECO:0000250" key="2">
    <source>
        <dbReference type="UniProtKB" id="O00429"/>
    </source>
</evidence>
<evidence type="ECO:0000250" key="3">
    <source>
        <dbReference type="UniProtKB" id="O35303"/>
    </source>
</evidence>
<evidence type="ECO:0000255" key="4">
    <source>
        <dbReference type="PROSITE-ProRule" id="PRU00720"/>
    </source>
</evidence>
<evidence type="ECO:0000255" key="5">
    <source>
        <dbReference type="PROSITE-ProRule" id="PRU01055"/>
    </source>
</evidence>
<evidence type="ECO:0000256" key="6">
    <source>
        <dbReference type="SAM" id="MobiDB-lite"/>
    </source>
</evidence>
<organism>
    <name type="scientific">Danio rerio</name>
    <name type="common">Zebrafish</name>
    <name type="synonym">Brachydanio rerio</name>
    <dbReference type="NCBI Taxonomy" id="7955"/>
    <lineage>
        <taxon>Eukaryota</taxon>
        <taxon>Metazoa</taxon>
        <taxon>Chordata</taxon>
        <taxon>Craniata</taxon>
        <taxon>Vertebrata</taxon>
        <taxon>Euteleostomi</taxon>
        <taxon>Actinopterygii</taxon>
        <taxon>Neopterygii</taxon>
        <taxon>Teleostei</taxon>
        <taxon>Ostariophysi</taxon>
        <taxon>Cypriniformes</taxon>
        <taxon>Danionidae</taxon>
        <taxon>Danioninae</taxon>
        <taxon>Danio</taxon>
    </lineage>
</organism>
<protein>
    <recommendedName>
        <fullName evidence="2">Dynamin-1-like protein</fullName>
        <ecNumber evidence="2">3.6.5.5</ecNumber>
    </recommendedName>
</protein>
<feature type="chain" id="PRO_0000206569" description="Dynamin-1-like protein">
    <location>
        <begin position="1"/>
        <end position="691"/>
    </location>
</feature>
<feature type="domain" description="Dynamin-type G" evidence="5">
    <location>
        <begin position="22"/>
        <end position="301"/>
    </location>
</feature>
<feature type="domain" description="GED" evidence="4">
    <location>
        <begin position="599"/>
        <end position="690"/>
    </location>
</feature>
<feature type="region of interest" description="G1 motif" evidence="5">
    <location>
        <begin position="32"/>
        <end position="39"/>
    </location>
</feature>
<feature type="region of interest" description="G2 motif" evidence="5">
    <location>
        <begin position="58"/>
        <end position="60"/>
    </location>
</feature>
<feature type="region of interest" description="G3 motif" evidence="5">
    <location>
        <begin position="145"/>
        <end position="148"/>
    </location>
</feature>
<feature type="region of interest" description="G4 motif" evidence="5">
    <location>
        <begin position="214"/>
        <end position="217"/>
    </location>
</feature>
<feature type="region of interest" description="G5 motif" evidence="5">
    <location>
        <begin position="244"/>
        <end position="247"/>
    </location>
</feature>
<feature type="region of interest" description="Middle domain" evidence="2">
    <location>
        <begin position="343"/>
        <end position="488"/>
    </location>
</feature>
<feature type="region of interest" description="Disordered" evidence="6">
    <location>
        <begin position="522"/>
        <end position="573"/>
    </location>
</feature>
<feature type="region of interest" description="Important for homodimerization" evidence="2">
    <location>
        <begin position="609"/>
        <end position="623"/>
    </location>
</feature>
<feature type="compositionally biased region" description="Basic and acidic residues" evidence="6">
    <location>
        <begin position="522"/>
        <end position="531"/>
    </location>
</feature>
<feature type="compositionally biased region" description="Basic and acidic residues" evidence="6">
    <location>
        <begin position="551"/>
        <end position="563"/>
    </location>
</feature>
<feature type="binding site" evidence="2">
    <location>
        <begin position="32"/>
        <end position="40"/>
    </location>
    <ligand>
        <name>GTP</name>
        <dbReference type="ChEBI" id="CHEBI:37565"/>
    </ligand>
</feature>
<feature type="binding site" evidence="2">
    <location>
        <begin position="214"/>
        <end position="220"/>
    </location>
    <ligand>
        <name>GTP</name>
        <dbReference type="ChEBI" id="CHEBI:37565"/>
    </ligand>
</feature>
<feature type="binding site" evidence="2">
    <location>
        <begin position="245"/>
        <end position="248"/>
    </location>
    <ligand>
        <name>GTP</name>
        <dbReference type="ChEBI" id="CHEBI:37565"/>
    </ligand>
</feature>
<comment type="function">
    <text evidence="2">Functions in mitochondrial and peroxisomal division. Mediates membrane fission through oligomerization into membrane-associated tubular structures that wrap around the scission site to constrict and sever the mitochondrial membrane through a GTP hydrolysis-dependent mechanism. The specific recruitment at scission sites is mediated by membrane receptors like MFF, MIEF1 and MIEF2 for mitochondrial membranes. While the recruitment by the membrane receptors is GTP-dependent, the following hydrolysis of GTP induces the dissociation from the receptors and allows DNM1L filaments to curl into closed rings that are probably sufficient to sever a double membrane (By similarity). May play a role in the circadian control of mitochondrial ATP production (By similarity).</text>
</comment>
<comment type="catalytic activity">
    <reaction evidence="2">
        <text>GTP + H2O = GDP + phosphate + H(+)</text>
        <dbReference type="Rhea" id="RHEA:19669"/>
        <dbReference type="ChEBI" id="CHEBI:15377"/>
        <dbReference type="ChEBI" id="CHEBI:15378"/>
        <dbReference type="ChEBI" id="CHEBI:37565"/>
        <dbReference type="ChEBI" id="CHEBI:43474"/>
        <dbReference type="ChEBI" id="CHEBI:58189"/>
        <dbReference type="EC" id="3.6.5.5"/>
    </reaction>
</comment>
<comment type="subunit">
    <text evidence="2">Homotetramer; dimerizes through the N-terminal GTP-middle region of one molecule binding to the GED domain of another DNM1L molecule. Oligomerizes in a GTP-dependent manner to form membrane-associated tubules with a spiral pattern.</text>
</comment>
<comment type="subcellular location">
    <subcellularLocation>
        <location evidence="2">Cytoplasm</location>
        <location evidence="2">Cytosol</location>
    </subcellularLocation>
    <subcellularLocation>
        <location evidence="2">Golgi apparatus</location>
    </subcellularLocation>
    <subcellularLocation>
        <location evidence="2">Endomembrane system</location>
        <topology evidence="1">Peripheral membrane protein</topology>
    </subcellularLocation>
    <subcellularLocation>
        <location evidence="2">Mitochondrion outer membrane</location>
        <topology evidence="1">Peripheral membrane protein</topology>
    </subcellularLocation>
    <subcellularLocation>
        <location evidence="2">Peroxisome</location>
    </subcellularLocation>
    <subcellularLocation>
        <location evidence="3">Membrane</location>
        <location evidence="3">Clathrin-coated pit</location>
    </subcellularLocation>
    <subcellularLocation>
        <location evidence="3">Cytoplasmic vesicle</location>
        <location evidence="3">Secretory vesicle</location>
        <location evidence="3">Synaptic vesicle membrane</location>
    </subcellularLocation>
</comment>
<comment type="domain">
    <text evidence="2">The GED domain folds back to interact, in cis, with the GTP-binding domain and middle domain, and interacts, in trans, with the GED domains of other DNM1L molecules, and is thus critical for activating GTPase activity and for DNM1L dimerization.</text>
</comment>
<comment type="similarity">
    <text evidence="5">Belongs to the TRAFAC class dynamin-like GTPase superfamily. Dynamin/Fzo/YdjA family.</text>
</comment>
<name>DNM1L_DANRE</name>
<proteinExistence type="evidence at transcript level"/>
<accession>Q7SXN5</accession>
<gene>
    <name evidence="2" type="primary">dnm1l</name>
    <name type="ORF">zgc:66163</name>
</gene>
<sequence>MEALIPVINKLQDVFNTVGADIIQLPQIAVVGTQSSGKSSVLESLVGRDLLPRGTGIVTRRPLILQLVHVDPEDRRKTSEENGVDGEEWGKFLHTKNKIYTDFDEIRQEIENETERVSGNNKGISDEPIHLKIFSPHVVNLTLVDLPGITKVPVGDQPKDIELQIRELILKYISNPNSIILAVTAANTDMATSEALKVAREVDPDGRRTLAVVTKLDLMDAGTDAMDVLMGRVIPVKLGLIGVVNRSQLDINNKKSVADSIRDEHGFLQKKYPSLANRNGTKYLARTLNRLLMHHIRDCLPELKTRINVLSAQYQSLLSSYGEPVEDMSATLLQLITKFATEYCNTIEGTAKYIETAELCGGARICYIFHETFGRTLESVDPLGGLTTIDVLTAIRNATGPRPALFVPEVSFELLVKRQVKRLEEPSLRCVELVHEEMQRIIQHCSNYSTQELLRFPKLHDAIVEVVTSLLRKRLPVTNEMVHNLVAIELAYINTKHPDFADACGLMNNNIEEQRRNRMRELPTSVPRDKMAGGAQAEQEGGTGTWRGMLKKGDEGQGEEKTKLQSSIPASPQKGHAVNLLDVPVPVARKLSAREQRDCEVIERLIKSYFLIVRKNIQDSVPKAVMHFLVNHVKDSLQSELVGQLYKPALLDDLLTESEDMAQRRNEAADMLKALQKASQVIAEIRETHLW</sequence>
<dbReference type="EC" id="3.6.5.5" evidence="2"/>
<dbReference type="EMBL" id="BC055521">
    <property type="protein sequence ID" value="AAH55521.1"/>
    <property type="molecule type" value="mRNA"/>
</dbReference>
<dbReference type="RefSeq" id="NP_957216.1">
    <property type="nucleotide sequence ID" value="NM_200922.1"/>
</dbReference>
<dbReference type="SMR" id="Q7SXN5"/>
<dbReference type="FunCoup" id="Q7SXN5">
    <property type="interactions" value="3473"/>
</dbReference>
<dbReference type="STRING" id="7955.ENSDARP00000142560"/>
<dbReference type="PaxDb" id="7955-ENSDARP00000006315"/>
<dbReference type="Ensembl" id="ENSDART00000006840">
    <property type="protein sequence ID" value="ENSDARP00000006315"/>
    <property type="gene ID" value="ENSDARG00000015006"/>
</dbReference>
<dbReference type="GeneID" id="393896"/>
<dbReference type="KEGG" id="dre:393896"/>
<dbReference type="AGR" id="ZFIN:ZDB-GENE-040426-1556"/>
<dbReference type="CTD" id="10059"/>
<dbReference type="ZFIN" id="ZDB-GENE-040426-1556">
    <property type="gene designation" value="dnm1l"/>
</dbReference>
<dbReference type="eggNOG" id="KOG0446">
    <property type="taxonomic scope" value="Eukaryota"/>
</dbReference>
<dbReference type="HOGENOM" id="CLU_008964_5_0_1"/>
<dbReference type="InParanoid" id="Q7SXN5"/>
<dbReference type="OrthoDB" id="5061070at2759"/>
<dbReference type="PhylomeDB" id="Q7SXN5"/>
<dbReference type="TreeFam" id="TF352031"/>
<dbReference type="Reactome" id="R-DRE-75153">
    <property type="pathway name" value="Apoptotic execution phase"/>
</dbReference>
<dbReference type="PRO" id="PR:Q7SXN5"/>
<dbReference type="Proteomes" id="UP000000437">
    <property type="component" value="Chromosome 25"/>
</dbReference>
<dbReference type="Bgee" id="ENSDARG00000015006">
    <property type="expression patterns" value="Expressed in testis and 27 other cell types or tissues"/>
</dbReference>
<dbReference type="ExpressionAtlas" id="Q7SXN5">
    <property type="expression patterns" value="baseline"/>
</dbReference>
<dbReference type="GO" id="GO:0005905">
    <property type="term" value="C:clathrin-coated pit"/>
    <property type="evidence" value="ECO:0007669"/>
    <property type="project" value="UniProtKB-SubCell"/>
</dbReference>
<dbReference type="GO" id="GO:0005737">
    <property type="term" value="C:cytoplasm"/>
    <property type="evidence" value="ECO:0000318"/>
    <property type="project" value="GO_Central"/>
</dbReference>
<dbReference type="GO" id="GO:0005829">
    <property type="term" value="C:cytosol"/>
    <property type="evidence" value="ECO:0000250"/>
    <property type="project" value="UniProtKB"/>
</dbReference>
<dbReference type="GO" id="GO:0005794">
    <property type="term" value="C:Golgi apparatus"/>
    <property type="evidence" value="ECO:0007669"/>
    <property type="project" value="UniProtKB-SubCell"/>
</dbReference>
<dbReference type="GO" id="GO:0016020">
    <property type="term" value="C:membrane"/>
    <property type="evidence" value="ECO:0000318"/>
    <property type="project" value="GO_Central"/>
</dbReference>
<dbReference type="GO" id="GO:0005874">
    <property type="term" value="C:microtubule"/>
    <property type="evidence" value="ECO:0000318"/>
    <property type="project" value="GO_Central"/>
</dbReference>
<dbReference type="GO" id="GO:0005741">
    <property type="term" value="C:mitochondrial outer membrane"/>
    <property type="evidence" value="ECO:0000250"/>
    <property type="project" value="UniProtKB"/>
</dbReference>
<dbReference type="GO" id="GO:0005739">
    <property type="term" value="C:mitochondrion"/>
    <property type="evidence" value="ECO:0000250"/>
    <property type="project" value="UniProtKB"/>
</dbReference>
<dbReference type="GO" id="GO:0005777">
    <property type="term" value="C:peroxisome"/>
    <property type="evidence" value="ECO:0000250"/>
    <property type="project" value="UniProtKB"/>
</dbReference>
<dbReference type="GO" id="GO:0030672">
    <property type="term" value="C:synaptic vesicle membrane"/>
    <property type="evidence" value="ECO:0007669"/>
    <property type="project" value="UniProtKB-SubCell"/>
</dbReference>
<dbReference type="GO" id="GO:0005525">
    <property type="term" value="F:GTP binding"/>
    <property type="evidence" value="ECO:0007669"/>
    <property type="project" value="UniProtKB-KW"/>
</dbReference>
<dbReference type="GO" id="GO:0003924">
    <property type="term" value="F:GTPase activity"/>
    <property type="evidence" value="ECO:0000250"/>
    <property type="project" value="UniProtKB"/>
</dbReference>
<dbReference type="GO" id="GO:0008289">
    <property type="term" value="F:lipid binding"/>
    <property type="evidence" value="ECO:0007669"/>
    <property type="project" value="UniProtKB-KW"/>
</dbReference>
<dbReference type="GO" id="GO:0008017">
    <property type="term" value="F:microtubule binding"/>
    <property type="evidence" value="ECO:0000318"/>
    <property type="project" value="GO_Central"/>
</dbReference>
<dbReference type="GO" id="GO:0042803">
    <property type="term" value="F:protein homodimerization activity"/>
    <property type="evidence" value="ECO:0000250"/>
    <property type="project" value="UniProtKB"/>
</dbReference>
<dbReference type="GO" id="GO:0006897">
    <property type="term" value="P:endocytosis"/>
    <property type="evidence" value="ECO:0000318"/>
    <property type="project" value="GO_Central"/>
</dbReference>
<dbReference type="GO" id="GO:0048312">
    <property type="term" value="P:intracellular distribution of mitochondria"/>
    <property type="evidence" value="ECO:0000318"/>
    <property type="project" value="GO_Central"/>
</dbReference>
<dbReference type="GO" id="GO:0000266">
    <property type="term" value="P:mitochondrial fission"/>
    <property type="evidence" value="ECO:0000250"/>
    <property type="project" value="UniProtKB"/>
</dbReference>
<dbReference type="GO" id="GO:0043653">
    <property type="term" value="P:mitochondrial fragmentation involved in apoptotic process"/>
    <property type="evidence" value="ECO:0000318"/>
    <property type="project" value="GO_Central"/>
</dbReference>
<dbReference type="GO" id="GO:0016559">
    <property type="term" value="P:peroxisome fission"/>
    <property type="evidence" value="ECO:0000250"/>
    <property type="project" value="UniProtKB"/>
</dbReference>
<dbReference type="GO" id="GO:0051259">
    <property type="term" value="P:protein complex oligomerization"/>
    <property type="evidence" value="ECO:0000250"/>
    <property type="project" value="UniProtKB"/>
</dbReference>
<dbReference type="GO" id="GO:0048511">
    <property type="term" value="P:rhythmic process"/>
    <property type="evidence" value="ECO:0007669"/>
    <property type="project" value="UniProtKB-KW"/>
</dbReference>
<dbReference type="CDD" id="cd08771">
    <property type="entry name" value="DLP_1"/>
    <property type="match status" value="1"/>
</dbReference>
<dbReference type="FunFam" id="1.20.120.1240:FF:000001">
    <property type="entry name" value="Dynamin 1 like"/>
    <property type="match status" value="1"/>
</dbReference>
<dbReference type="FunFam" id="3.40.50.300:FF:000172">
    <property type="entry name" value="Dynamin-1-like protein isoform 1"/>
    <property type="match status" value="1"/>
</dbReference>
<dbReference type="Gene3D" id="1.20.120.1240">
    <property type="entry name" value="Dynamin, middle domain"/>
    <property type="match status" value="1"/>
</dbReference>
<dbReference type="Gene3D" id="3.40.50.300">
    <property type="entry name" value="P-loop containing nucleotide triphosphate hydrolases"/>
    <property type="match status" value="1"/>
</dbReference>
<dbReference type="InterPro" id="IPR022812">
    <property type="entry name" value="Dynamin"/>
</dbReference>
<dbReference type="InterPro" id="IPR001401">
    <property type="entry name" value="Dynamin_GTPase"/>
</dbReference>
<dbReference type="InterPro" id="IPR019762">
    <property type="entry name" value="Dynamin_GTPase_CS"/>
</dbReference>
<dbReference type="InterPro" id="IPR045063">
    <property type="entry name" value="Dynamin_N"/>
</dbReference>
<dbReference type="InterPro" id="IPR000375">
    <property type="entry name" value="Dynamin_stalk"/>
</dbReference>
<dbReference type="InterPro" id="IPR030381">
    <property type="entry name" value="G_DYNAMIN_dom"/>
</dbReference>
<dbReference type="InterPro" id="IPR003130">
    <property type="entry name" value="GED"/>
</dbReference>
<dbReference type="InterPro" id="IPR020850">
    <property type="entry name" value="GED_dom"/>
</dbReference>
<dbReference type="InterPro" id="IPR027417">
    <property type="entry name" value="P-loop_NTPase"/>
</dbReference>
<dbReference type="PANTHER" id="PTHR11566">
    <property type="entry name" value="DYNAMIN"/>
    <property type="match status" value="1"/>
</dbReference>
<dbReference type="PANTHER" id="PTHR11566:SF39">
    <property type="entry name" value="DYNAMIN-1-LIKE PROTEIN"/>
    <property type="match status" value="1"/>
</dbReference>
<dbReference type="Pfam" id="PF01031">
    <property type="entry name" value="Dynamin_M"/>
    <property type="match status" value="1"/>
</dbReference>
<dbReference type="Pfam" id="PF00350">
    <property type="entry name" value="Dynamin_N"/>
    <property type="match status" value="1"/>
</dbReference>
<dbReference type="Pfam" id="PF02212">
    <property type="entry name" value="GED"/>
    <property type="match status" value="1"/>
</dbReference>
<dbReference type="PRINTS" id="PR00195">
    <property type="entry name" value="DYNAMIN"/>
</dbReference>
<dbReference type="SMART" id="SM00053">
    <property type="entry name" value="DYNc"/>
    <property type="match status" value="1"/>
</dbReference>
<dbReference type="SMART" id="SM00302">
    <property type="entry name" value="GED"/>
    <property type="match status" value="1"/>
</dbReference>
<dbReference type="SUPFAM" id="SSF52540">
    <property type="entry name" value="P-loop containing nucleoside triphosphate hydrolases"/>
    <property type="match status" value="1"/>
</dbReference>
<dbReference type="PROSITE" id="PS00410">
    <property type="entry name" value="G_DYNAMIN_1"/>
    <property type="match status" value="1"/>
</dbReference>
<dbReference type="PROSITE" id="PS51718">
    <property type="entry name" value="G_DYNAMIN_2"/>
    <property type="match status" value="1"/>
</dbReference>
<dbReference type="PROSITE" id="PS51388">
    <property type="entry name" value="GED"/>
    <property type="match status" value="1"/>
</dbReference>